<comment type="function">
    <text evidence="1">Allows the formation of correctly charged Gln-tRNA(Gln) through the transamidation of misacylated Glu-tRNA(Gln) in organisms which lack glutaminyl-tRNA synthetase. The reaction takes place in the presence of glutamine and ATP through an activated gamma-phospho-Glu-tRNA(Gln).</text>
</comment>
<comment type="catalytic activity">
    <reaction evidence="1">
        <text>L-glutamyl-tRNA(Gln) + L-glutamine + ATP + H2O = L-glutaminyl-tRNA(Gln) + L-glutamate + ADP + phosphate + H(+)</text>
        <dbReference type="Rhea" id="RHEA:17521"/>
        <dbReference type="Rhea" id="RHEA-COMP:9681"/>
        <dbReference type="Rhea" id="RHEA-COMP:9684"/>
        <dbReference type="ChEBI" id="CHEBI:15377"/>
        <dbReference type="ChEBI" id="CHEBI:15378"/>
        <dbReference type="ChEBI" id="CHEBI:29985"/>
        <dbReference type="ChEBI" id="CHEBI:30616"/>
        <dbReference type="ChEBI" id="CHEBI:43474"/>
        <dbReference type="ChEBI" id="CHEBI:58359"/>
        <dbReference type="ChEBI" id="CHEBI:78520"/>
        <dbReference type="ChEBI" id="CHEBI:78521"/>
        <dbReference type="ChEBI" id="CHEBI:456216"/>
        <dbReference type="EC" id="6.3.5.7"/>
    </reaction>
</comment>
<comment type="subunit">
    <text evidence="1">Heterotrimer of A, B and C subunits.</text>
</comment>
<comment type="similarity">
    <text evidence="1">Belongs to the amidase family. GatA subfamily.</text>
</comment>
<gene>
    <name evidence="1" type="primary">gatA</name>
    <name type="ordered locus">SACOL1961</name>
</gene>
<accession>Q5HEM2</accession>
<keyword id="KW-0067">ATP-binding</keyword>
<keyword id="KW-0436">Ligase</keyword>
<keyword id="KW-0547">Nucleotide-binding</keyword>
<keyword id="KW-0648">Protein biosynthesis</keyword>
<name>GATA_STAAC</name>
<sequence>MSIRYESVENLLTLIKDKKIKPSDVVKDIYDAIEETDPTIKSFLALDKENAIKKAQELDELQAKDQMDGKLFGIPMGIKDNIITNGLETTCASKMLEGFVPIYESTVMEKLHNENAVLIGKLNMDEFAMGGSTETSYFKKTVNPFDHKAVPGGSSGGSAAAVAAGLVPFSLGSDTGGSIRQPAAYCGVVGMKPTYGRVSRFGLVAFASSLDQIGPLTRNVKDNAIVLEAISGADVNDSTSAPVDDVDFTSEIGKDIKGLKVALPKEYLGEGVADDVKEAVQNAVETLKSLGAVVEEVSLPNTKFGIPSYYVIASSEASSNLSRFDGIRYGYHSKEAHSLEELYKMSRSEGFGKEVKRRIFLGTFALSSGYYDAYYKKSQKVRTLIKNDFDKVFENYDVVVGPTAPTTAFNLGEEIDDPLTMYANDLLTTPVNLAGLPGISVPCGQSNGRPIGLQFIGKPFDEKTLYRVAYQYETQYNLHDVYEKL</sequence>
<proteinExistence type="inferred from homology"/>
<protein>
    <recommendedName>
        <fullName evidence="1">Glutamyl-tRNA(Gln) amidotransferase subunit A</fullName>
        <shortName evidence="1">Glu-ADT subunit A</shortName>
        <ecNumber evidence="1">6.3.5.7</ecNumber>
    </recommendedName>
</protein>
<evidence type="ECO:0000255" key="1">
    <source>
        <dbReference type="HAMAP-Rule" id="MF_00120"/>
    </source>
</evidence>
<organism>
    <name type="scientific">Staphylococcus aureus (strain COL)</name>
    <dbReference type="NCBI Taxonomy" id="93062"/>
    <lineage>
        <taxon>Bacteria</taxon>
        <taxon>Bacillati</taxon>
        <taxon>Bacillota</taxon>
        <taxon>Bacilli</taxon>
        <taxon>Bacillales</taxon>
        <taxon>Staphylococcaceae</taxon>
        <taxon>Staphylococcus</taxon>
    </lineage>
</organism>
<feature type="chain" id="PRO_0000105198" description="Glutamyl-tRNA(Gln) amidotransferase subunit A">
    <location>
        <begin position="1"/>
        <end position="485"/>
    </location>
</feature>
<feature type="active site" description="Charge relay system" evidence="1">
    <location>
        <position position="79"/>
    </location>
</feature>
<feature type="active site" description="Charge relay system" evidence="1">
    <location>
        <position position="154"/>
    </location>
</feature>
<feature type="active site" description="Acyl-ester intermediate" evidence="1">
    <location>
        <position position="178"/>
    </location>
</feature>
<reference key="1">
    <citation type="journal article" date="2005" name="J. Bacteriol.">
        <title>Insights on evolution of virulence and resistance from the complete genome analysis of an early methicillin-resistant Staphylococcus aureus strain and a biofilm-producing methicillin-resistant Staphylococcus epidermidis strain.</title>
        <authorList>
            <person name="Gill S.R."/>
            <person name="Fouts D.E."/>
            <person name="Archer G.L."/>
            <person name="Mongodin E.F."/>
            <person name="DeBoy R.T."/>
            <person name="Ravel J."/>
            <person name="Paulsen I.T."/>
            <person name="Kolonay J.F."/>
            <person name="Brinkac L.M."/>
            <person name="Beanan M.J."/>
            <person name="Dodson R.J."/>
            <person name="Daugherty S.C."/>
            <person name="Madupu R."/>
            <person name="Angiuoli S.V."/>
            <person name="Durkin A.S."/>
            <person name="Haft D.H."/>
            <person name="Vamathevan J.J."/>
            <person name="Khouri H."/>
            <person name="Utterback T.R."/>
            <person name="Lee C."/>
            <person name="Dimitrov G."/>
            <person name="Jiang L."/>
            <person name="Qin H."/>
            <person name="Weidman J."/>
            <person name="Tran K."/>
            <person name="Kang K.H."/>
            <person name="Hance I.R."/>
            <person name="Nelson K.E."/>
            <person name="Fraser C.M."/>
        </authorList>
    </citation>
    <scope>NUCLEOTIDE SEQUENCE [LARGE SCALE GENOMIC DNA]</scope>
    <source>
        <strain>COL</strain>
    </source>
</reference>
<dbReference type="EC" id="6.3.5.7" evidence="1"/>
<dbReference type="EMBL" id="CP000046">
    <property type="protein sequence ID" value="AAW38401.1"/>
    <property type="molecule type" value="Genomic_DNA"/>
</dbReference>
<dbReference type="RefSeq" id="WP_000027928.1">
    <property type="nucleotide sequence ID" value="NZ_JBGOFO010000006.1"/>
</dbReference>
<dbReference type="SMR" id="Q5HEM2"/>
<dbReference type="KEGG" id="sac:SACOL1961"/>
<dbReference type="HOGENOM" id="CLU_009600_0_3_9"/>
<dbReference type="Proteomes" id="UP000000530">
    <property type="component" value="Chromosome"/>
</dbReference>
<dbReference type="GO" id="GO:0030956">
    <property type="term" value="C:glutamyl-tRNA(Gln) amidotransferase complex"/>
    <property type="evidence" value="ECO:0007669"/>
    <property type="project" value="InterPro"/>
</dbReference>
<dbReference type="GO" id="GO:0005524">
    <property type="term" value="F:ATP binding"/>
    <property type="evidence" value="ECO:0007669"/>
    <property type="project" value="UniProtKB-KW"/>
</dbReference>
<dbReference type="GO" id="GO:0050567">
    <property type="term" value="F:glutaminyl-tRNA synthase (glutamine-hydrolyzing) activity"/>
    <property type="evidence" value="ECO:0007669"/>
    <property type="project" value="UniProtKB-UniRule"/>
</dbReference>
<dbReference type="GO" id="GO:0006412">
    <property type="term" value="P:translation"/>
    <property type="evidence" value="ECO:0007669"/>
    <property type="project" value="UniProtKB-UniRule"/>
</dbReference>
<dbReference type="Gene3D" id="3.90.1300.10">
    <property type="entry name" value="Amidase signature (AS) domain"/>
    <property type="match status" value="1"/>
</dbReference>
<dbReference type="HAMAP" id="MF_00120">
    <property type="entry name" value="GatA"/>
    <property type="match status" value="1"/>
</dbReference>
<dbReference type="InterPro" id="IPR000120">
    <property type="entry name" value="Amidase"/>
</dbReference>
<dbReference type="InterPro" id="IPR020556">
    <property type="entry name" value="Amidase_CS"/>
</dbReference>
<dbReference type="InterPro" id="IPR023631">
    <property type="entry name" value="Amidase_dom"/>
</dbReference>
<dbReference type="InterPro" id="IPR036928">
    <property type="entry name" value="AS_sf"/>
</dbReference>
<dbReference type="InterPro" id="IPR004412">
    <property type="entry name" value="GatA"/>
</dbReference>
<dbReference type="NCBIfam" id="TIGR00132">
    <property type="entry name" value="gatA"/>
    <property type="match status" value="1"/>
</dbReference>
<dbReference type="PANTHER" id="PTHR11895:SF151">
    <property type="entry name" value="GLUTAMYL-TRNA(GLN) AMIDOTRANSFERASE SUBUNIT A"/>
    <property type="match status" value="1"/>
</dbReference>
<dbReference type="PANTHER" id="PTHR11895">
    <property type="entry name" value="TRANSAMIDASE"/>
    <property type="match status" value="1"/>
</dbReference>
<dbReference type="Pfam" id="PF01425">
    <property type="entry name" value="Amidase"/>
    <property type="match status" value="1"/>
</dbReference>
<dbReference type="SUPFAM" id="SSF75304">
    <property type="entry name" value="Amidase signature (AS) enzymes"/>
    <property type="match status" value="1"/>
</dbReference>
<dbReference type="PROSITE" id="PS00571">
    <property type="entry name" value="AMIDASES"/>
    <property type="match status" value="1"/>
</dbReference>